<sequence length="96" mass="10828">MNYVKIIEKNKNFIELELVNDDHSLSNLVKEILLAKDGVILASYGVEHPVLDPDTGRYISNPTIMLKTDEKTDAETVLKEALKDIVDLCNKTLEDL</sequence>
<gene>
    <name evidence="1" type="primary">rpo11</name>
    <name evidence="1" type="synonym">rpoL</name>
    <name type="ordered locus">MMP0261</name>
</gene>
<accession>Q6M0K9</accession>
<dbReference type="EC" id="2.7.7.6" evidence="1"/>
<dbReference type="EMBL" id="BX950229">
    <property type="protein sequence ID" value="CAF29817.1"/>
    <property type="molecule type" value="Genomic_DNA"/>
</dbReference>
<dbReference type="RefSeq" id="WP_011170205.1">
    <property type="nucleotide sequence ID" value="NC_005791.1"/>
</dbReference>
<dbReference type="SMR" id="Q6M0K9"/>
<dbReference type="STRING" id="267377.MMP0261"/>
<dbReference type="EnsemblBacteria" id="CAF29817">
    <property type="protein sequence ID" value="CAF29817"/>
    <property type="gene ID" value="MMP0261"/>
</dbReference>
<dbReference type="GeneID" id="2762248"/>
<dbReference type="KEGG" id="mmp:MMP0261"/>
<dbReference type="PATRIC" id="fig|267377.15.peg.263"/>
<dbReference type="eggNOG" id="arCOG04111">
    <property type="taxonomic scope" value="Archaea"/>
</dbReference>
<dbReference type="HOGENOM" id="CLU_090381_5_0_2"/>
<dbReference type="OrthoDB" id="24205at2157"/>
<dbReference type="Proteomes" id="UP000000590">
    <property type="component" value="Chromosome"/>
</dbReference>
<dbReference type="GO" id="GO:0005737">
    <property type="term" value="C:cytoplasm"/>
    <property type="evidence" value="ECO:0007669"/>
    <property type="project" value="UniProtKB-SubCell"/>
</dbReference>
<dbReference type="GO" id="GO:0000428">
    <property type="term" value="C:DNA-directed RNA polymerase complex"/>
    <property type="evidence" value="ECO:0007669"/>
    <property type="project" value="UniProtKB-KW"/>
</dbReference>
<dbReference type="GO" id="GO:0003677">
    <property type="term" value="F:DNA binding"/>
    <property type="evidence" value="ECO:0007669"/>
    <property type="project" value="InterPro"/>
</dbReference>
<dbReference type="GO" id="GO:0003899">
    <property type="term" value="F:DNA-directed RNA polymerase activity"/>
    <property type="evidence" value="ECO:0007669"/>
    <property type="project" value="UniProtKB-UniRule"/>
</dbReference>
<dbReference type="GO" id="GO:0046983">
    <property type="term" value="F:protein dimerization activity"/>
    <property type="evidence" value="ECO:0007669"/>
    <property type="project" value="InterPro"/>
</dbReference>
<dbReference type="GO" id="GO:0006351">
    <property type="term" value="P:DNA-templated transcription"/>
    <property type="evidence" value="ECO:0007669"/>
    <property type="project" value="UniProtKB-UniRule"/>
</dbReference>
<dbReference type="CDD" id="cd06927">
    <property type="entry name" value="RNAP_L"/>
    <property type="match status" value="1"/>
</dbReference>
<dbReference type="Gene3D" id="3.30.1360.10">
    <property type="entry name" value="RNA polymerase, RBP11-like subunit"/>
    <property type="match status" value="1"/>
</dbReference>
<dbReference type="HAMAP" id="MF_00261">
    <property type="entry name" value="RNApol_arch_Rpo11"/>
    <property type="match status" value="1"/>
</dbReference>
<dbReference type="InterPro" id="IPR036603">
    <property type="entry name" value="RBP11-like"/>
</dbReference>
<dbReference type="InterPro" id="IPR009025">
    <property type="entry name" value="RBP11-like_dimer"/>
</dbReference>
<dbReference type="InterPro" id="IPR008193">
    <property type="entry name" value="RNA_pol_Rpb11_13-16kDa_CS"/>
</dbReference>
<dbReference type="InterPro" id="IPR022905">
    <property type="entry name" value="Rpo11-like"/>
</dbReference>
<dbReference type="NCBIfam" id="NF002234">
    <property type="entry name" value="PRK01146.1-2"/>
    <property type="match status" value="1"/>
</dbReference>
<dbReference type="Pfam" id="PF13656">
    <property type="entry name" value="RNA_pol_L_2"/>
    <property type="match status" value="1"/>
</dbReference>
<dbReference type="SUPFAM" id="SSF55257">
    <property type="entry name" value="RBP11-like subunits of RNA polymerase"/>
    <property type="match status" value="1"/>
</dbReference>
<dbReference type="PROSITE" id="PS01154">
    <property type="entry name" value="RNA_POL_L_13KD"/>
    <property type="match status" value="1"/>
</dbReference>
<keyword id="KW-0963">Cytoplasm</keyword>
<keyword id="KW-0240">DNA-directed RNA polymerase</keyword>
<keyword id="KW-0548">Nucleotidyltransferase</keyword>
<keyword id="KW-1185">Reference proteome</keyword>
<keyword id="KW-0804">Transcription</keyword>
<keyword id="KW-0808">Transferase</keyword>
<evidence type="ECO:0000255" key="1">
    <source>
        <dbReference type="HAMAP-Rule" id="MF_00261"/>
    </source>
</evidence>
<reference key="1">
    <citation type="journal article" date="2004" name="J. Bacteriol.">
        <title>Complete genome sequence of the genetically tractable hydrogenotrophic methanogen Methanococcus maripaludis.</title>
        <authorList>
            <person name="Hendrickson E.L."/>
            <person name="Kaul R."/>
            <person name="Zhou Y."/>
            <person name="Bovee D."/>
            <person name="Chapman P."/>
            <person name="Chung J."/>
            <person name="Conway de Macario E."/>
            <person name="Dodsworth J.A."/>
            <person name="Gillett W."/>
            <person name="Graham D.E."/>
            <person name="Hackett M."/>
            <person name="Haydock A.K."/>
            <person name="Kang A."/>
            <person name="Land M.L."/>
            <person name="Levy R."/>
            <person name="Lie T.J."/>
            <person name="Major T.A."/>
            <person name="Moore B.C."/>
            <person name="Porat I."/>
            <person name="Palmeiri A."/>
            <person name="Rouse G."/>
            <person name="Saenphimmachak C."/>
            <person name="Soell D."/>
            <person name="Van Dien S."/>
            <person name="Wang T."/>
            <person name="Whitman W.B."/>
            <person name="Xia Q."/>
            <person name="Zhang Y."/>
            <person name="Larimer F.W."/>
            <person name="Olson M.V."/>
            <person name="Leigh J.A."/>
        </authorList>
    </citation>
    <scope>NUCLEOTIDE SEQUENCE [LARGE SCALE GENOMIC DNA]</scope>
    <source>
        <strain>DSM 14266 / JCM 13030 / NBRC 101832 / S2 / LL</strain>
    </source>
</reference>
<feature type="chain" id="PRO_0000149329" description="DNA-directed RNA polymerase subunit Rpo11">
    <location>
        <begin position="1"/>
        <end position="96"/>
    </location>
</feature>
<comment type="function">
    <text evidence="1">DNA-dependent RNA polymerase (RNAP) catalyzes the transcription of DNA into RNA using the four ribonucleoside triphosphates as substrates.</text>
</comment>
<comment type="catalytic activity">
    <reaction evidence="1">
        <text>RNA(n) + a ribonucleoside 5'-triphosphate = RNA(n+1) + diphosphate</text>
        <dbReference type="Rhea" id="RHEA:21248"/>
        <dbReference type="Rhea" id="RHEA-COMP:14527"/>
        <dbReference type="Rhea" id="RHEA-COMP:17342"/>
        <dbReference type="ChEBI" id="CHEBI:33019"/>
        <dbReference type="ChEBI" id="CHEBI:61557"/>
        <dbReference type="ChEBI" id="CHEBI:140395"/>
        <dbReference type="EC" id="2.7.7.6"/>
    </reaction>
</comment>
<comment type="subunit">
    <text evidence="1">Part of the RNA polymerase complex.</text>
</comment>
<comment type="subcellular location">
    <subcellularLocation>
        <location evidence="1">Cytoplasm</location>
    </subcellularLocation>
</comment>
<comment type="similarity">
    <text evidence="1">Belongs to the archaeal Rpo11/eukaryotic RPB11/RPC19 RNA polymerase subunit family.</text>
</comment>
<name>RPO11_METMP</name>
<proteinExistence type="inferred from homology"/>
<protein>
    <recommendedName>
        <fullName evidence="1">DNA-directed RNA polymerase subunit Rpo11</fullName>
        <ecNumber evidence="1">2.7.7.6</ecNumber>
    </recommendedName>
    <alternativeName>
        <fullName evidence="1">DNA-directed RNA polymerase subunit L</fullName>
    </alternativeName>
</protein>
<organism>
    <name type="scientific">Methanococcus maripaludis (strain DSM 14266 / JCM 13030 / NBRC 101832 / S2 / LL)</name>
    <dbReference type="NCBI Taxonomy" id="267377"/>
    <lineage>
        <taxon>Archaea</taxon>
        <taxon>Methanobacteriati</taxon>
        <taxon>Methanobacteriota</taxon>
        <taxon>Methanomada group</taxon>
        <taxon>Methanococci</taxon>
        <taxon>Methanococcales</taxon>
        <taxon>Methanococcaceae</taxon>
        <taxon>Methanococcus</taxon>
    </lineage>
</organism>